<gene>
    <name type="primary">rps8</name>
</gene>
<feature type="chain" id="PRO_0000276727" description="Small ribosomal subunit protein uS8c">
    <location>
        <begin position="1"/>
        <end position="129"/>
    </location>
</feature>
<reference key="1">
    <citation type="journal article" date="2006" name="BMC Biol.">
        <title>The complete chloroplast DNA sequence of the green alga Oltmannsiellopsis viridis reveals a distinctive quadripartite architecture in the chloroplast genome of early diverging ulvophytes.</title>
        <authorList>
            <person name="Pombert J.-F."/>
            <person name="Lemieux C."/>
            <person name="Turmel M."/>
        </authorList>
    </citation>
    <scope>NUCLEOTIDE SEQUENCE [LARGE SCALE GENOMIC DNA]</scope>
</reference>
<geneLocation type="chloroplast"/>
<dbReference type="EMBL" id="DQ291132">
    <property type="protein sequence ID" value="ABB82000.1"/>
    <property type="molecule type" value="Genomic_DNA"/>
</dbReference>
<dbReference type="RefSeq" id="YP_635839.1">
    <property type="nucleotide sequence ID" value="NC_008099.1"/>
</dbReference>
<dbReference type="SMR" id="Q20F06"/>
<dbReference type="GeneID" id="4100176"/>
<dbReference type="GO" id="GO:0009507">
    <property type="term" value="C:chloroplast"/>
    <property type="evidence" value="ECO:0007669"/>
    <property type="project" value="UniProtKB-SubCell"/>
</dbReference>
<dbReference type="GO" id="GO:1990904">
    <property type="term" value="C:ribonucleoprotein complex"/>
    <property type="evidence" value="ECO:0007669"/>
    <property type="project" value="UniProtKB-KW"/>
</dbReference>
<dbReference type="GO" id="GO:0005840">
    <property type="term" value="C:ribosome"/>
    <property type="evidence" value="ECO:0007669"/>
    <property type="project" value="UniProtKB-KW"/>
</dbReference>
<dbReference type="GO" id="GO:0019843">
    <property type="term" value="F:rRNA binding"/>
    <property type="evidence" value="ECO:0007669"/>
    <property type="project" value="UniProtKB-UniRule"/>
</dbReference>
<dbReference type="GO" id="GO:0003735">
    <property type="term" value="F:structural constituent of ribosome"/>
    <property type="evidence" value="ECO:0007669"/>
    <property type="project" value="InterPro"/>
</dbReference>
<dbReference type="GO" id="GO:0006412">
    <property type="term" value="P:translation"/>
    <property type="evidence" value="ECO:0007669"/>
    <property type="project" value="UniProtKB-UniRule"/>
</dbReference>
<dbReference type="FunFam" id="3.30.1490.10:FF:000001">
    <property type="entry name" value="30S ribosomal protein S8"/>
    <property type="match status" value="1"/>
</dbReference>
<dbReference type="Gene3D" id="3.30.1370.30">
    <property type="match status" value="1"/>
</dbReference>
<dbReference type="Gene3D" id="3.30.1490.10">
    <property type="match status" value="1"/>
</dbReference>
<dbReference type="HAMAP" id="MF_01302_B">
    <property type="entry name" value="Ribosomal_uS8_B"/>
    <property type="match status" value="1"/>
</dbReference>
<dbReference type="InterPro" id="IPR000630">
    <property type="entry name" value="Ribosomal_uS8"/>
</dbReference>
<dbReference type="InterPro" id="IPR035987">
    <property type="entry name" value="Ribosomal_uS8_sf"/>
</dbReference>
<dbReference type="NCBIfam" id="NF001109">
    <property type="entry name" value="PRK00136.1"/>
    <property type="match status" value="1"/>
</dbReference>
<dbReference type="PANTHER" id="PTHR11758">
    <property type="entry name" value="40S RIBOSOMAL PROTEIN S15A"/>
    <property type="match status" value="1"/>
</dbReference>
<dbReference type="Pfam" id="PF00410">
    <property type="entry name" value="Ribosomal_S8"/>
    <property type="match status" value="1"/>
</dbReference>
<dbReference type="SUPFAM" id="SSF56047">
    <property type="entry name" value="Ribosomal protein S8"/>
    <property type="match status" value="1"/>
</dbReference>
<keyword id="KW-0150">Chloroplast</keyword>
<keyword id="KW-0934">Plastid</keyword>
<keyword id="KW-0687">Ribonucleoprotein</keyword>
<keyword id="KW-0689">Ribosomal protein</keyword>
<keyword id="KW-0694">RNA-binding</keyword>
<keyword id="KW-0699">rRNA-binding</keyword>
<comment type="function">
    <text evidence="1">One of the primary rRNA binding proteins, it binds directly to 16S rRNA central domain where it helps coordinate assembly of the platform of the 30S subunit.</text>
</comment>
<comment type="subunit">
    <text evidence="1">Part of the 30S ribosomal subunit.</text>
</comment>
<comment type="subcellular location">
    <subcellularLocation>
        <location>Plastid</location>
        <location>Chloroplast</location>
    </subcellularLocation>
</comment>
<comment type="similarity">
    <text evidence="2">Belongs to the universal ribosomal protein uS8 family.</text>
</comment>
<protein>
    <recommendedName>
        <fullName evidence="2">Small ribosomal subunit protein uS8c</fullName>
    </recommendedName>
    <alternativeName>
        <fullName>30S ribosomal protein S8, chloroplastic</fullName>
    </alternativeName>
</protein>
<accession>Q20F06</accession>
<evidence type="ECO:0000250" key="1"/>
<evidence type="ECO:0000305" key="2"/>
<sequence length="129" mass="14674">MVNDCISDLLTRIRNANLVKKEKLIIPNTRVSRNICALLEKEGFIDSCQVNSTEELALQLKYKGRERKPCITNLRRISKPGLRIYASYKNIPKILNGMGVVFVSTSQGLMTDREARYRKLGGEIVCSVW</sequence>
<organism>
    <name type="scientific">Oltmannsiellopsis viridis</name>
    <name type="common">Marine flagellate</name>
    <name type="synonym">Oltmannsiella viridis</name>
    <dbReference type="NCBI Taxonomy" id="51324"/>
    <lineage>
        <taxon>Eukaryota</taxon>
        <taxon>Viridiplantae</taxon>
        <taxon>Chlorophyta</taxon>
        <taxon>Ulvophyceae</taxon>
        <taxon>Oltmannsiellopsidales</taxon>
        <taxon>Oltmannsiellopsidaceae</taxon>
        <taxon>Oltmannsiellopsis</taxon>
    </lineage>
</organism>
<name>RR8_OLTVI</name>
<proteinExistence type="inferred from homology"/>